<protein>
    <recommendedName>
        <fullName evidence="1">Protein ApaG</fullName>
    </recommendedName>
</protein>
<reference key="1">
    <citation type="journal article" date="2009" name="Genome Res.">
        <title>Newly introduced genomic prophage islands are critical determinants of in vivo competitiveness in the Liverpool epidemic strain of Pseudomonas aeruginosa.</title>
        <authorList>
            <person name="Winstanley C."/>
            <person name="Langille M.G.I."/>
            <person name="Fothergill J.L."/>
            <person name="Kukavica-Ibrulj I."/>
            <person name="Paradis-Bleau C."/>
            <person name="Sanschagrin F."/>
            <person name="Thomson N.R."/>
            <person name="Winsor G.L."/>
            <person name="Quail M.A."/>
            <person name="Lennard N."/>
            <person name="Bignell A."/>
            <person name="Clarke L."/>
            <person name="Seeger K."/>
            <person name="Saunders D."/>
            <person name="Harris D."/>
            <person name="Parkhill J."/>
            <person name="Hancock R.E.W."/>
            <person name="Brinkman F.S.L."/>
            <person name="Levesque R.C."/>
        </authorList>
    </citation>
    <scope>NUCLEOTIDE SEQUENCE [LARGE SCALE GENOMIC DNA]</scope>
    <source>
        <strain>LESB58</strain>
    </source>
</reference>
<accession>B7V4H7</accession>
<feature type="chain" id="PRO_1000133801" description="Protein ApaG">
    <location>
        <begin position="1"/>
        <end position="126"/>
    </location>
</feature>
<feature type="domain" description="ApaG" evidence="1">
    <location>
        <begin position="2"/>
        <end position="126"/>
    </location>
</feature>
<dbReference type="EMBL" id="FM209186">
    <property type="protein sequence ID" value="CAW25315.1"/>
    <property type="molecule type" value="Genomic_DNA"/>
</dbReference>
<dbReference type="RefSeq" id="WP_003085085.1">
    <property type="nucleotide sequence ID" value="NC_011770.1"/>
</dbReference>
<dbReference type="SMR" id="B7V4H7"/>
<dbReference type="KEGG" id="pag:PLES_05881"/>
<dbReference type="HOGENOM" id="CLU_128074_0_0_6"/>
<dbReference type="GO" id="GO:0070987">
    <property type="term" value="P:error-free translesion synthesis"/>
    <property type="evidence" value="ECO:0007669"/>
    <property type="project" value="TreeGrafter"/>
</dbReference>
<dbReference type="Gene3D" id="2.60.40.1470">
    <property type="entry name" value="ApaG domain"/>
    <property type="match status" value="1"/>
</dbReference>
<dbReference type="HAMAP" id="MF_00791">
    <property type="entry name" value="ApaG"/>
    <property type="match status" value="1"/>
</dbReference>
<dbReference type="InterPro" id="IPR007474">
    <property type="entry name" value="ApaG_domain"/>
</dbReference>
<dbReference type="InterPro" id="IPR036767">
    <property type="entry name" value="ApaG_sf"/>
</dbReference>
<dbReference type="InterPro" id="IPR023065">
    <property type="entry name" value="Uncharacterised_ApaG"/>
</dbReference>
<dbReference type="NCBIfam" id="NF003967">
    <property type="entry name" value="PRK05461.1"/>
    <property type="match status" value="1"/>
</dbReference>
<dbReference type="PANTHER" id="PTHR14289">
    <property type="entry name" value="F-BOX ONLY PROTEIN 3"/>
    <property type="match status" value="1"/>
</dbReference>
<dbReference type="PANTHER" id="PTHR14289:SF16">
    <property type="entry name" value="POLYMERASE DELTA-INTERACTING PROTEIN 2"/>
    <property type="match status" value="1"/>
</dbReference>
<dbReference type="Pfam" id="PF04379">
    <property type="entry name" value="DUF525"/>
    <property type="match status" value="1"/>
</dbReference>
<dbReference type="SUPFAM" id="SSF110069">
    <property type="entry name" value="ApaG-like"/>
    <property type="match status" value="1"/>
</dbReference>
<dbReference type="PROSITE" id="PS51087">
    <property type="entry name" value="APAG"/>
    <property type="match status" value="1"/>
</dbReference>
<gene>
    <name evidence="1" type="primary">apaG</name>
    <name type="ordered locus">PLES_05881</name>
</gene>
<organism>
    <name type="scientific">Pseudomonas aeruginosa (strain LESB58)</name>
    <dbReference type="NCBI Taxonomy" id="557722"/>
    <lineage>
        <taxon>Bacteria</taxon>
        <taxon>Pseudomonadati</taxon>
        <taxon>Pseudomonadota</taxon>
        <taxon>Gammaproteobacteria</taxon>
        <taxon>Pseudomonadales</taxon>
        <taxon>Pseudomonadaceae</taxon>
        <taxon>Pseudomonas</taxon>
    </lineage>
</organism>
<sequence length="126" mass="13622">MSDTQHQVNVRVDTRYLPEQSAPEQNRFAFAYTVTIENQGEVPAQLLSRHWIITDGDGRTQEVRGAGVVGEQPLIAPGAQHTYTSGTVLATRVGSMRGSYQMLGSDGIAFDAAIPVFRLAVPGALH</sequence>
<proteinExistence type="inferred from homology"/>
<name>APAG_PSEA8</name>
<evidence type="ECO:0000255" key="1">
    <source>
        <dbReference type="HAMAP-Rule" id="MF_00791"/>
    </source>
</evidence>